<keyword id="KW-0067">ATP-binding</keyword>
<keyword id="KW-0963">Cytoplasm</keyword>
<keyword id="KW-0547">Nucleotide-binding</keyword>
<keyword id="KW-0694">RNA-binding</keyword>
<keyword id="KW-0784">Thiamine biosynthesis</keyword>
<keyword id="KW-0808">Transferase</keyword>
<keyword id="KW-0820">tRNA-binding</keyword>
<gene>
    <name evidence="1" type="primary">thiI</name>
    <name type="ordered locus">CKR_0733</name>
</gene>
<comment type="function">
    <text evidence="1">Catalyzes the ATP-dependent transfer of a sulfur to tRNA to produce 4-thiouridine in position 8 of tRNAs, which functions as a near-UV photosensor. Also catalyzes the transfer of sulfur to the sulfur carrier protein ThiS, forming ThiS-thiocarboxylate. This is a step in the synthesis of thiazole, in the thiamine biosynthesis pathway. The sulfur is donated as persulfide by IscS.</text>
</comment>
<comment type="catalytic activity">
    <reaction evidence="1">
        <text>[ThiI sulfur-carrier protein]-S-sulfanyl-L-cysteine + a uridine in tRNA + 2 reduced [2Fe-2S]-[ferredoxin] + ATP + H(+) = [ThiI sulfur-carrier protein]-L-cysteine + a 4-thiouridine in tRNA + 2 oxidized [2Fe-2S]-[ferredoxin] + AMP + diphosphate</text>
        <dbReference type="Rhea" id="RHEA:24176"/>
        <dbReference type="Rhea" id="RHEA-COMP:10000"/>
        <dbReference type="Rhea" id="RHEA-COMP:10001"/>
        <dbReference type="Rhea" id="RHEA-COMP:13337"/>
        <dbReference type="Rhea" id="RHEA-COMP:13338"/>
        <dbReference type="Rhea" id="RHEA-COMP:13339"/>
        <dbReference type="Rhea" id="RHEA-COMP:13340"/>
        <dbReference type="ChEBI" id="CHEBI:15378"/>
        <dbReference type="ChEBI" id="CHEBI:29950"/>
        <dbReference type="ChEBI" id="CHEBI:30616"/>
        <dbReference type="ChEBI" id="CHEBI:33019"/>
        <dbReference type="ChEBI" id="CHEBI:33737"/>
        <dbReference type="ChEBI" id="CHEBI:33738"/>
        <dbReference type="ChEBI" id="CHEBI:61963"/>
        <dbReference type="ChEBI" id="CHEBI:65315"/>
        <dbReference type="ChEBI" id="CHEBI:136798"/>
        <dbReference type="ChEBI" id="CHEBI:456215"/>
        <dbReference type="EC" id="2.8.1.4"/>
    </reaction>
</comment>
<comment type="catalytic activity">
    <reaction evidence="1">
        <text>[ThiS sulfur-carrier protein]-C-terminal Gly-Gly-AMP + S-sulfanyl-L-cysteinyl-[cysteine desulfurase] + AH2 = [ThiS sulfur-carrier protein]-C-terminal-Gly-aminoethanethioate + L-cysteinyl-[cysteine desulfurase] + A + AMP + 2 H(+)</text>
        <dbReference type="Rhea" id="RHEA:43340"/>
        <dbReference type="Rhea" id="RHEA-COMP:12157"/>
        <dbReference type="Rhea" id="RHEA-COMP:12158"/>
        <dbReference type="Rhea" id="RHEA-COMP:12910"/>
        <dbReference type="Rhea" id="RHEA-COMP:19908"/>
        <dbReference type="ChEBI" id="CHEBI:13193"/>
        <dbReference type="ChEBI" id="CHEBI:15378"/>
        <dbReference type="ChEBI" id="CHEBI:17499"/>
        <dbReference type="ChEBI" id="CHEBI:29950"/>
        <dbReference type="ChEBI" id="CHEBI:61963"/>
        <dbReference type="ChEBI" id="CHEBI:90618"/>
        <dbReference type="ChEBI" id="CHEBI:232372"/>
        <dbReference type="ChEBI" id="CHEBI:456215"/>
    </reaction>
</comment>
<comment type="pathway">
    <text evidence="1">Cofactor biosynthesis; thiamine diphosphate biosynthesis.</text>
</comment>
<comment type="subcellular location">
    <subcellularLocation>
        <location evidence="1">Cytoplasm</location>
    </subcellularLocation>
</comment>
<comment type="similarity">
    <text evidence="1">Belongs to the ThiI family.</text>
</comment>
<accession>B9DZV9</accession>
<dbReference type="EC" id="2.8.1.4" evidence="1"/>
<dbReference type="EMBL" id="AP009049">
    <property type="protein sequence ID" value="BAH05784.1"/>
    <property type="molecule type" value="Genomic_DNA"/>
</dbReference>
<dbReference type="RefSeq" id="WP_011989385.1">
    <property type="nucleotide sequence ID" value="NC_011837.1"/>
</dbReference>
<dbReference type="SMR" id="B9DZV9"/>
<dbReference type="KEGG" id="ckr:CKR_0733"/>
<dbReference type="HOGENOM" id="CLU_037952_4_0_9"/>
<dbReference type="UniPathway" id="UPA00060"/>
<dbReference type="Proteomes" id="UP000007969">
    <property type="component" value="Chromosome"/>
</dbReference>
<dbReference type="GO" id="GO:0005829">
    <property type="term" value="C:cytosol"/>
    <property type="evidence" value="ECO:0007669"/>
    <property type="project" value="TreeGrafter"/>
</dbReference>
<dbReference type="GO" id="GO:0005524">
    <property type="term" value="F:ATP binding"/>
    <property type="evidence" value="ECO:0007669"/>
    <property type="project" value="UniProtKB-UniRule"/>
</dbReference>
<dbReference type="GO" id="GO:0004810">
    <property type="term" value="F:CCA tRNA nucleotidyltransferase activity"/>
    <property type="evidence" value="ECO:0007669"/>
    <property type="project" value="InterPro"/>
</dbReference>
<dbReference type="GO" id="GO:0000049">
    <property type="term" value="F:tRNA binding"/>
    <property type="evidence" value="ECO:0007669"/>
    <property type="project" value="UniProtKB-UniRule"/>
</dbReference>
<dbReference type="GO" id="GO:0140741">
    <property type="term" value="F:tRNA-uracil-4 sulfurtransferase activity"/>
    <property type="evidence" value="ECO:0007669"/>
    <property type="project" value="UniProtKB-EC"/>
</dbReference>
<dbReference type="GO" id="GO:0009228">
    <property type="term" value="P:thiamine biosynthetic process"/>
    <property type="evidence" value="ECO:0007669"/>
    <property type="project" value="UniProtKB-KW"/>
</dbReference>
<dbReference type="GO" id="GO:0009229">
    <property type="term" value="P:thiamine diphosphate biosynthetic process"/>
    <property type="evidence" value="ECO:0007669"/>
    <property type="project" value="UniProtKB-UniRule"/>
</dbReference>
<dbReference type="GO" id="GO:0052837">
    <property type="term" value="P:thiazole biosynthetic process"/>
    <property type="evidence" value="ECO:0007669"/>
    <property type="project" value="TreeGrafter"/>
</dbReference>
<dbReference type="GO" id="GO:0002937">
    <property type="term" value="P:tRNA 4-thiouridine biosynthesis"/>
    <property type="evidence" value="ECO:0007669"/>
    <property type="project" value="TreeGrafter"/>
</dbReference>
<dbReference type="CDD" id="cd01712">
    <property type="entry name" value="PPase_ThiI"/>
    <property type="match status" value="1"/>
</dbReference>
<dbReference type="CDD" id="cd11716">
    <property type="entry name" value="THUMP_ThiI"/>
    <property type="match status" value="1"/>
</dbReference>
<dbReference type="FunFam" id="3.40.50.620:FF:000053">
    <property type="entry name" value="Probable tRNA sulfurtransferase"/>
    <property type="match status" value="1"/>
</dbReference>
<dbReference type="Gene3D" id="3.30.2130.30">
    <property type="match status" value="1"/>
</dbReference>
<dbReference type="Gene3D" id="3.40.50.620">
    <property type="entry name" value="HUPs"/>
    <property type="match status" value="1"/>
</dbReference>
<dbReference type="HAMAP" id="MF_00021">
    <property type="entry name" value="ThiI"/>
    <property type="match status" value="1"/>
</dbReference>
<dbReference type="InterPro" id="IPR014729">
    <property type="entry name" value="Rossmann-like_a/b/a_fold"/>
</dbReference>
<dbReference type="InterPro" id="IPR020536">
    <property type="entry name" value="ThiI_AANH"/>
</dbReference>
<dbReference type="InterPro" id="IPR054173">
    <property type="entry name" value="ThiI_fer"/>
</dbReference>
<dbReference type="InterPro" id="IPR049961">
    <property type="entry name" value="ThiI_N"/>
</dbReference>
<dbReference type="InterPro" id="IPR004114">
    <property type="entry name" value="THUMP_dom"/>
</dbReference>
<dbReference type="InterPro" id="IPR049962">
    <property type="entry name" value="THUMP_ThiI"/>
</dbReference>
<dbReference type="InterPro" id="IPR003720">
    <property type="entry name" value="tRNA_STrfase"/>
</dbReference>
<dbReference type="InterPro" id="IPR050102">
    <property type="entry name" value="tRNA_sulfurtransferase_ThiI"/>
</dbReference>
<dbReference type="NCBIfam" id="TIGR00342">
    <property type="entry name" value="tRNA uracil 4-sulfurtransferase ThiI"/>
    <property type="match status" value="1"/>
</dbReference>
<dbReference type="PANTHER" id="PTHR43209">
    <property type="entry name" value="TRNA SULFURTRANSFERASE"/>
    <property type="match status" value="1"/>
</dbReference>
<dbReference type="PANTHER" id="PTHR43209:SF1">
    <property type="entry name" value="TRNA SULFURTRANSFERASE"/>
    <property type="match status" value="1"/>
</dbReference>
<dbReference type="Pfam" id="PF02568">
    <property type="entry name" value="ThiI"/>
    <property type="match status" value="1"/>
</dbReference>
<dbReference type="Pfam" id="PF22025">
    <property type="entry name" value="ThiI_fer"/>
    <property type="match status" value="1"/>
</dbReference>
<dbReference type="Pfam" id="PF02926">
    <property type="entry name" value="THUMP"/>
    <property type="match status" value="1"/>
</dbReference>
<dbReference type="SMART" id="SM00981">
    <property type="entry name" value="THUMP"/>
    <property type="match status" value="1"/>
</dbReference>
<dbReference type="SUPFAM" id="SSF52402">
    <property type="entry name" value="Adenine nucleotide alpha hydrolases-like"/>
    <property type="match status" value="1"/>
</dbReference>
<dbReference type="SUPFAM" id="SSF143437">
    <property type="entry name" value="THUMP domain-like"/>
    <property type="match status" value="1"/>
</dbReference>
<dbReference type="PROSITE" id="PS51165">
    <property type="entry name" value="THUMP"/>
    <property type="match status" value="1"/>
</dbReference>
<proteinExistence type="inferred from homology"/>
<feature type="chain" id="PRO_1000196923" description="Probable tRNA sulfurtransferase">
    <location>
        <begin position="1"/>
        <end position="381"/>
    </location>
</feature>
<feature type="domain" description="THUMP" evidence="1">
    <location>
        <begin position="57"/>
        <end position="160"/>
    </location>
</feature>
<feature type="binding site" evidence="1">
    <location>
        <begin position="177"/>
        <end position="178"/>
    </location>
    <ligand>
        <name>ATP</name>
        <dbReference type="ChEBI" id="CHEBI:30616"/>
    </ligand>
</feature>
<feature type="binding site" evidence="1">
    <location>
        <begin position="202"/>
        <end position="203"/>
    </location>
    <ligand>
        <name>ATP</name>
        <dbReference type="ChEBI" id="CHEBI:30616"/>
    </ligand>
</feature>
<feature type="binding site" evidence="1">
    <location>
        <position position="259"/>
    </location>
    <ligand>
        <name>ATP</name>
        <dbReference type="ChEBI" id="CHEBI:30616"/>
    </ligand>
</feature>
<feature type="binding site" evidence="1">
    <location>
        <position position="281"/>
    </location>
    <ligand>
        <name>ATP</name>
        <dbReference type="ChEBI" id="CHEBI:30616"/>
    </ligand>
</feature>
<feature type="binding site" evidence="1">
    <location>
        <position position="290"/>
    </location>
    <ligand>
        <name>ATP</name>
        <dbReference type="ChEBI" id="CHEBI:30616"/>
    </ligand>
</feature>
<organism>
    <name type="scientific">Clostridium kluyveri (strain NBRC 12016)</name>
    <dbReference type="NCBI Taxonomy" id="583346"/>
    <lineage>
        <taxon>Bacteria</taxon>
        <taxon>Bacillati</taxon>
        <taxon>Bacillota</taxon>
        <taxon>Clostridia</taxon>
        <taxon>Eubacteriales</taxon>
        <taxon>Clostridiaceae</taxon>
        <taxon>Clostridium</taxon>
    </lineage>
</organism>
<protein>
    <recommendedName>
        <fullName evidence="1">Probable tRNA sulfurtransferase</fullName>
        <ecNumber evidence="1">2.8.1.4</ecNumber>
    </recommendedName>
    <alternativeName>
        <fullName evidence="1">Sulfur carrier protein ThiS sulfurtransferase</fullName>
    </alternativeName>
    <alternativeName>
        <fullName evidence="1">Thiamine biosynthesis protein ThiI</fullName>
    </alternativeName>
    <alternativeName>
        <fullName evidence="1">tRNA 4-thiouridine synthase</fullName>
    </alternativeName>
</protein>
<evidence type="ECO:0000255" key="1">
    <source>
        <dbReference type="HAMAP-Rule" id="MF_00021"/>
    </source>
</evidence>
<reference key="1">
    <citation type="submission" date="2005-09" db="EMBL/GenBank/DDBJ databases">
        <title>Complete genome sequence of Clostridium kluyveri and comparative genomics of Clostridia species.</title>
        <authorList>
            <person name="Inui M."/>
            <person name="Nonaka H."/>
            <person name="Shinoda Y."/>
            <person name="Ikenaga Y."/>
            <person name="Abe M."/>
            <person name="Naito K."/>
            <person name="Vertes A.A."/>
            <person name="Yukawa H."/>
        </authorList>
    </citation>
    <scope>NUCLEOTIDE SEQUENCE [LARGE SCALE GENOMIC DNA]</scope>
    <source>
        <strain>NBRC 12016</strain>
    </source>
</reference>
<sequence>MKRLLLVKYASEIFLKGLNKGKFEKKLKDNIKNILKDVQYNFVMDQGRWFIECSDIEKGIEKLKSVFGVWEICVVDEVEADMEKIKEQSLKNALESKGSTFKVLTKRADKSFPGTSMEVSREIGAYILQNVPNLSVDIKNPDFFVNIEIRNKAYVYSKKIKAVGGMPYGTNGNTLLMLSGGIDSPVAGYMMARRGVQLNCIYFHSHPYTSERAKEKVKELAGILKGYTGNINLYITPFTEIQMQIIEKCRKDELTIIMRRFMMRIACIIADKYNINSVTTGESIGQVASQTMEGLVVSNQAADRPVFRPLIAMDKVDIMEVAREIGTYETSILPYEDCCTIFVPKHPKTKPRLQEIIKSEENLDIDVLVEEAVCDTEFLSI</sequence>
<name>THII_CLOK1</name>